<sequence>SLSVKDKAAVRALWSKISKSSDAIGNDALSRMIVVYPQTKTYFSHWPDVTPGSAHIKAHGKKVMGGIALAVSKIDDLNAGLLELSEQHAYKLRVDPANFKILNHCILVVISTMFPKDFTPEAHVSLDKFLSGVALALAERYR</sequence>
<protein>
    <recommendedName>
        <fullName>Hemoglobin subunit alpha-1</fullName>
    </recommendedName>
    <alternativeName>
        <fullName>Alpha-1-globin</fullName>
    </alternativeName>
    <alternativeName>
        <fullName>Hemoglobin alpha-1 chain</fullName>
    </alternativeName>
</protein>
<organism evidence="3">
    <name type="scientific">Gobionotothen gibberifrons</name>
    <name type="common">Humped rockcod</name>
    <name type="synonym">Notothenia gibberifrons</name>
    <dbReference type="NCBI Taxonomy" id="36202"/>
    <lineage>
        <taxon>Eukaryota</taxon>
        <taxon>Metazoa</taxon>
        <taxon>Chordata</taxon>
        <taxon>Craniata</taxon>
        <taxon>Vertebrata</taxon>
        <taxon>Euteleostomi</taxon>
        <taxon>Actinopterygii</taxon>
        <taxon>Neopterygii</taxon>
        <taxon>Teleostei</taxon>
        <taxon>Neoteleostei</taxon>
        <taxon>Acanthomorphata</taxon>
        <taxon>Eupercaria</taxon>
        <taxon>Perciformes</taxon>
        <taxon>Notothenioidei</taxon>
        <taxon>Nototheniidae</taxon>
        <taxon>Gobionotothen</taxon>
    </lineage>
</organism>
<proteinExistence type="evidence at protein level"/>
<feature type="chain" id="PRO_0000052640" description="Hemoglobin subunit alpha-1">
    <location>
        <begin position="1"/>
        <end position="142"/>
    </location>
</feature>
<feature type="domain" description="Globin" evidence="1">
    <location>
        <begin position="1"/>
        <end position="142"/>
    </location>
</feature>
<feature type="binding site" evidence="1">
    <location>
        <position position="59"/>
    </location>
    <ligand>
        <name>O2</name>
        <dbReference type="ChEBI" id="CHEBI:15379"/>
    </ligand>
</feature>
<feature type="binding site" description="proximal binding residue" evidence="1">
    <location>
        <position position="88"/>
    </location>
    <ligand>
        <name>heme b</name>
        <dbReference type="ChEBI" id="CHEBI:60344"/>
    </ligand>
    <ligandPart>
        <name>Fe</name>
        <dbReference type="ChEBI" id="CHEBI:18248"/>
    </ligandPart>
</feature>
<feature type="modified residue" description="N-acetylserine" evidence="2">
    <location>
        <position position="1"/>
    </location>
</feature>
<reference evidence="3" key="1">
    <citation type="journal article" date="2003" name="Eur. J. Biochem.">
        <title>Unique features of the hemoglobin system of the Antarctic fish Gobionotothen gibberifrons.</title>
        <authorList>
            <person name="Marinakis P."/>
            <person name="Tamburrini M."/>
            <person name="Carratore V."/>
            <person name="di Prisco G."/>
        </authorList>
    </citation>
    <scope>PROTEIN SEQUENCE</scope>
    <scope>SUBUNIT</scope>
    <scope>MASS SPECTROMETRY</scope>
    <scope>ACETYLATION AT SER-1</scope>
    <source>
        <tissue evidence="2">Blood</tissue>
    </source>
</reference>
<evidence type="ECO:0000255" key="1">
    <source>
        <dbReference type="PROSITE-ProRule" id="PRU00238"/>
    </source>
</evidence>
<evidence type="ECO:0000269" key="2">
    <source>
    </source>
</evidence>
<evidence type="ECO:0000305" key="3"/>
<accession>P83611</accession>
<keyword id="KW-0007">Acetylation</keyword>
<keyword id="KW-0903">Direct protein sequencing</keyword>
<keyword id="KW-0349">Heme</keyword>
<keyword id="KW-0408">Iron</keyword>
<keyword id="KW-0479">Metal-binding</keyword>
<keyword id="KW-0561">Oxygen transport</keyword>
<keyword id="KW-0813">Transport</keyword>
<comment type="function">
    <text>Involved in oxygen transport from gills to the various peripheral tissues.</text>
</comment>
<comment type="subunit">
    <text evidence="2">Hb 1 is a heterotetramer of two alpha-1 and two beta-1 chains.</text>
</comment>
<comment type="tissue specificity">
    <text evidence="3">Red blood cells.</text>
</comment>
<comment type="mass spectrometry"/>
<comment type="miscellaneous">
    <text>This fish has two hemoglobins: Hb1 (major) and Hb2 (about 15-20% of the total). They display the Root effect and the alkaline Bohr effect, which is enhanced by organophosphate and to a lesser extent by chloride.</text>
</comment>
<comment type="similarity">
    <text evidence="1 3">Belongs to the globin family.</text>
</comment>
<dbReference type="SMR" id="P83611"/>
<dbReference type="iPTMnet" id="P83611"/>
<dbReference type="GO" id="GO:0072562">
    <property type="term" value="C:blood microparticle"/>
    <property type="evidence" value="ECO:0007669"/>
    <property type="project" value="TreeGrafter"/>
</dbReference>
<dbReference type="GO" id="GO:0031838">
    <property type="term" value="C:haptoglobin-hemoglobin complex"/>
    <property type="evidence" value="ECO:0007669"/>
    <property type="project" value="TreeGrafter"/>
</dbReference>
<dbReference type="GO" id="GO:0005833">
    <property type="term" value="C:hemoglobin complex"/>
    <property type="evidence" value="ECO:0007669"/>
    <property type="project" value="InterPro"/>
</dbReference>
<dbReference type="GO" id="GO:0031720">
    <property type="term" value="F:haptoglobin binding"/>
    <property type="evidence" value="ECO:0007669"/>
    <property type="project" value="TreeGrafter"/>
</dbReference>
<dbReference type="GO" id="GO:0020037">
    <property type="term" value="F:heme binding"/>
    <property type="evidence" value="ECO:0007669"/>
    <property type="project" value="InterPro"/>
</dbReference>
<dbReference type="GO" id="GO:0005506">
    <property type="term" value="F:iron ion binding"/>
    <property type="evidence" value="ECO:0007669"/>
    <property type="project" value="InterPro"/>
</dbReference>
<dbReference type="GO" id="GO:0043177">
    <property type="term" value="F:organic acid binding"/>
    <property type="evidence" value="ECO:0007669"/>
    <property type="project" value="TreeGrafter"/>
</dbReference>
<dbReference type="GO" id="GO:0019825">
    <property type="term" value="F:oxygen binding"/>
    <property type="evidence" value="ECO:0007669"/>
    <property type="project" value="InterPro"/>
</dbReference>
<dbReference type="GO" id="GO:0005344">
    <property type="term" value="F:oxygen carrier activity"/>
    <property type="evidence" value="ECO:0007669"/>
    <property type="project" value="UniProtKB-KW"/>
</dbReference>
<dbReference type="GO" id="GO:0004601">
    <property type="term" value="F:peroxidase activity"/>
    <property type="evidence" value="ECO:0007669"/>
    <property type="project" value="TreeGrafter"/>
</dbReference>
<dbReference type="GO" id="GO:0042744">
    <property type="term" value="P:hydrogen peroxide catabolic process"/>
    <property type="evidence" value="ECO:0007669"/>
    <property type="project" value="TreeGrafter"/>
</dbReference>
<dbReference type="CDD" id="cd08927">
    <property type="entry name" value="Hb-alpha-like"/>
    <property type="match status" value="1"/>
</dbReference>
<dbReference type="FunFam" id="1.10.490.10:FF:000002">
    <property type="entry name" value="Hemoglobin subunit alpha"/>
    <property type="match status" value="1"/>
</dbReference>
<dbReference type="Gene3D" id="1.10.490.10">
    <property type="entry name" value="Globins"/>
    <property type="match status" value="1"/>
</dbReference>
<dbReference type="InterPro" id="IPR000971">
    <property type="entry name" value="Globin"/>
</dbReference>
<dbReference type="InterPro" id="IPR009050">
    <property type="entry name" value="Globin-like_sf"/>
</dbReference>
<dbReference type="InterPro" id="IPR012292">
    <property type="entry name" value="Globin/Proto"/>
</dbReference>
<dbReference type="InterPro" id="IPR002338">
    <property type="entry name" value="Hemoglobin_a-typ"/>
</dbReference>
<dbReference type="InterPro" id="IPR050056">
    <property type="entry name" value="Hemoglobin_oxygen_transport"/>
</dbReference>
<dbReference type="InterPro" id="IPR002339">
    <property type="entry name" value="Hemoglobin_pi"/>
</dbReference>
<dbReference type="PANTHER" id="PTHR11442">
    <property type="entry name" value="HEMOGLOBIN FAMILY MEMBER"/>
    <property type="match status" value="1"/>
</dbReference>
<dbReference type="PANTHER" id="PTHR11442:SF41">
    <property type="entry name" value="HEMOGLOBIN SUBUNIT ZETA"/>
    <property type="match status" value="1"/>
</dbReference>
<dbReference type="Pfam" id="PF00042">
    <property type="entry name" value="Globin"/>
    <property type="match status" value="1"/>
</dbReference>
<dbReference type="PRINTS" id="PR00612">
    <property type="entry name" value="ALPHAHAEM"/>
</dbReference>
<dbReference type="PRINTS" id="PR00815">
    <property type="entry name" value="PIHAEM"/>
</dbReference>
<dbReference type="SUPFAM" id="SSF46458">
    <property type="entry name" value="Globin-like"/>
    <property type="match status" value="1"/>
</dbReference>
<dbReference type="PROSITE" id="PS01033">
    <property type="entry name" value="GLOBIN"/>
    <property type="match status" value="1"/>
</dbReference>
<name>HBA1_GOBGI</name>
<gene>
    <name type="primary">hba1</name>
</gene>